<keyword id="KW-0963">Cytoplasm</keyword>
<keyword id="KW-0227">DNA damage</keyword>
<keyword id="KW-0233">DNA recombination</keyword>
<keyword id="KW-0234">DNA repair</keyword>
<keyword id="KW-0238">DNA-binding</keyword>
<proteinExistence type="inferred from homology"/>
<name>RUVA_CERSK</name>
<accession>B9KKV6</accession>
<organism>
    <name type="scientific">Cereibacter sphaeroides (strain KD131 / KCTC 12085)</name>
    <name type="common">Rhodobacter sphaeroides</name>
    <dbReference type="NCBI Taxonomy" id="557760"/>
    <lineage>
        <taxon>Bacteria</taxon>
        <taxon>Pseudomonadati</taxon>
        <taxon>Pseudomonadota</taxon>
        <taxon>Alphaproteobacteria</taxon>
        <taxon>Rhodobacterales</taxon>
        <taxon>Paracoccaceae</taxon>
        <taxon>Cereibacter</taxon>
    </lineage>
</organism>
<dbReference type="EMBL" id="CP001150">
    <property type="protein sequence ID" value="ACM01753.1"/>
    <property type="molecule type" value="Genomic_DNA"/>
</dbReference>
<dbReference type="RefSeq" id="WP_015921048.1">
    <property type="nucleotide sequence ID" value="NC_011963.1"/>
</dbReference>
<dbReference type="SMR" id="B9KKV6"/>
<dbReference type="GeneID" id="67447289"/>
<dbReference type="KEGG" id="rsk:RSKD131_1893"/>
<dbReference type="HOGENOM" id="CLU_087936_3_0_5"/>
<dbReference type="GO" id="GO:0005737">
    <property type="term" value="C:cytoplasm"/>
    <property type="evidence" value="ECO:0007669"/>
    <property type="project" value="UniProtKB-SubCell"/>
</dbReference>
<dbReference type="GO" id="GO:0009379">
    <property type="term" value="C:Holliday junction helicase complex"/>
    <property type="evidence" value="ECO:0007669"/>
    <property type="project" value="InterPro"/>
</dbReference>
<dbReference type="GO" id="GO:0048476">
    <property type="term" value="C:Holliday junction resolvase complex"/>
    <property type="evidence" value="ECO:0007669"/>
    <property type="project" value="UniProtKB-UniRule"/>
</dbReference>
<dbReference type="GO" id="GO:0005524">
    <property type="term" value="F:ATP binding"/>
    <property type="evidence" value="ECO:0007669"/>
    <property type="project" value="InterPro"/>
</dbReference>
<dbReference type="GO" id="GO:0000400">
    <property type="term" value="F:four-way junction DNA binding"/>
    <property type="evidence" value="ECO:0007669"/>
    <property type="project" value="UniProtKB-UniRule"/>
</dbReference>
<dbReference type="GO" id="GO:0009378">
    <property type="term" value="F:four-way junction helicase activity"/>
    <property type="evidence" value="ECO:0007669"/>
    <property type="project" value="InterPro"/>
</dbReference>
<dbReference type="GO" id="GO:0006310">
    <property type="term" value="P:DNA recombination"/>
    <property type="evidence" value="ECO:0007669"/>
    <property type="project" value="UniProtKB-UniRule"/>
</dbReference>
<dbReference type="GO" id="GO:0006281">
    <property type="term" value="P:DNA repair"/>
    <property type="evidence" value="ECO:0007669"/>
    <property type="project" value="UniProtKB-UniRule"/>
</dbReference>
<dbReference type="CDD" id="cd14332">
    <property type="entry name" value="UBA_RuvA_C"/>
    <property type="match status" value="1"/>
</dbReference>
<dbReference type="Gene3D" id="1.10.150.20">
    <property type="entry name" value="5' to 3' exonuclease, C-terminal subdomain"/>
    <property type="match status" value="1"/>
</dbReference>
<dbReference type="Gene3D" id="1.10.8.10">
    <property type="entry name" value="DNA helicase RuvA subunit, C-terminal domain"/>
    <property type="match status" value="1"/>
</dbReference>
<dbReference type="Gene3D" id="2.40.50.140">
    <property type="entry name" value="Nucleic acid-binding proteins"/>
    <property type="match status" value="1"/>
</dbReference>
<dbReference type="HAMAP" id="MF_00031">
    <property type="entry name" value="DNA_HJ_migration_RuvA"/>
    <property type="match status" value="1"/>
</dbReference>
<dbReference type="InterPro" id="IPR013849">
    <property type="entry name" value="DNA_helicase_Holl-junc_RuvA_I"/>
</dbReference>
<dbReference type="InterPro" id="IPR003583">
    <property type="entry name" value="Hlx-hairpin-Hlx_DNA-bd_motif"/>
</dbReference>
<dbReference type="InterPro" id="IPR012340">
    <property type="entry name" value="NA-bd_OB-fold"/>
</dbReference>
<dbReference type="InterPro" id="IPR000085">
    <property type="entry name" value="RuvA"/>
</dbReference>
<dbReference type="InterPro" id="IPR010994">
    <property type="entry name" value="RuvA_2-like"/>
</dbReference>
<dbReference type="InterPro" id="IPR011114">
    <property type="entry name" value="RuvA_C"/>
</dbReference>
<dbReference type="InterPro" id="IPR036267">
    <property type="entry name" value="RuvA_C_sf"/>
</dbReference>
<dbReference type="NCBIfam" id="TIGR00084">
    <property type="entry name" value="ruvA"/>
    <property type="match status" value="1"/>
</dbReference>
<dbReference type="Pfam" id="PF14520">
    <property type="entry name" value="HHH_5"/>
    <property type="match status" value="1"/>
</dbReference>
<dbReference type="Pfam" id="PF07499">
    <property type="entry name" value="RuvA_C"/>
    <property type="match status" value="1"/>
</dbReference>
<dbReference type="Pfam" id="PF01330">
    <property type="entry name" value="RuvA_N"/>
    <property type="match status" value="1"/>
</dbReference>
<dbReference type="SMART" id="SM00278">
    <property type="entry name" value="HhH1"/>
    <property type="match status" value="2"/>
</dbReference>
<dbReference type="SUPFAM" id="SSF46929">
    <property type="entry name" value="DNA helicase RuvA subunit, C-terminal domain"/>
    <property type="match status" value="1"/>
</dbReference>
<dbReference type="SUPFAM" id="SSF50249">
    <property type="entry name" value="Nucleic acid-binding proteins"/>
    <property type="match status" value="1"/>
</dbReference>
<dbReference type="SUPFAM" id="SSF47781">
    <property type="entry name" value="RuvA domain 2-like"/>
    <property type="match status" value="1"/>
</dbReference>
<feature type="chain" id="PRO_1000195172" description="Holliday junction branch migration complex subunit RuvA">
    <location>
        <begin position="1"/>
        <end position="224"/>
    </location>
</feature>
<feature type="region of interest" description="Domain I" evidence="1">
    <location>
        <begin position="1"/>
        <end position="64"/>
    </location>
</feature>
<feature type="region of interest" description="Domain II" evidence="1">
    <location>
        <begin position="65"/>
        <end position="143"/>
    </location>
</feature>
<feature type="region of interest" description="Disordered" evidence="2">
    <location>
        <begin position="141"/>
        <end position="185"/>
    </location>
</feature>
<feature type="region of interest" description="Flexible linker" evidence="1">
    <location>
        <begin position="144"/>
        <end position="170"/>
    </location>
</feature>
<feature type="region of interest" description="Domain III" evidence="1">
    <location>
        <begin position="171"/>
        <end position="224"/>
    </location>
</feature>
<protein>
    <recommendedName>
        <fullName evidence="1">Holliday junction branch migration complex subunit RuvA</fullName>
    </recommendedName>
</protein>
<evidence type="ECO:0000255" key="1">
    <source>
        <dbReference type="HAMAP-Rule" id="MF_00031"/>
    </source>
</evidence>
<evidence type="ECO:0000256" key="2">
    <source>
        <dbReference type="SAM" id="MobiDB-lite"/>
    </source>
</evidence>
<reference key="1">
    <citation type="journal article" date="2009" name="J. Bacteriol.">
        <title>Complete genome sequence of Rhodobacter sphaeroides KD131.</title>
        <authorList>
            <person name="Lim S.-K."/>
            <person name="Kim S.J."/>
            <person name="Cha S.H."/>
            <person name="Oh Y.-K."/>
            <person name="Rhee H.-J."/>
            <person name="Kim M.-S."/>
            <person name="Lee J.K."/>
        </authorList>
    </citation>
    <scope>NUCLEOTIDE SEQUENCE [LARGE SCALE GENOMIC DNA]</scope>
    <source>
        <strain>KD131 / KCTC 12085</strain>
    </source>
</reference>
<sequence>MIGKVAGILDFRGPDHVLIDVRGVGYIVYVSDRTLASMPGLGEAVALYTELVVREDLLQLFGFPTMIEKEWHRLLMTVQGVGAKAGMAILGALGAEGTARAITLGDARSIQAAPGIGPKIAQRVVLELKSKAPALMAMGGGTAALAPSEPPEPQPGTSSGSRRKTRAPEPPRPSHTADALSALANLGYQPTDAAQAVAQAAGESPDADTAALIRAALKLLAPKS</sequence>
<gene>
    <name evidence="1" type="primary">ruvA</name>
    <name type="ordered locus">RSKD131_1893</name>
</gene>
<comment type="function">
    <text evidence="1">The RuvA-RuvB-RuvC complex processes Holliday junction (HJ) DNA during genetic recombination and DNA repair, while the RuvA-RuvB complex plays an important role in the rescue of blocked DNA replication forks via replication fork reversal (RFR). RuvA specifically binds to HJ cruciform DNA, conferring on it an open structure. The RuvB hexamer acts as an ATP-dependent pump, pulling dsDNA into and through the RuvAB complex. HJ branch migration allows RuvC to scan DNA until it finds its consensus sequence, where it cleaves and resolves the cruciform DNA.</text>
</comment>
<comment type="subunit">
    <text evidence="1">Homotetramer. Forms an RuvA(8)-RuvB(12)-Holliday junction (HJ) complex. HJ DNA is sandwiched between 2 RuvA tetramers; dsDNA enters through RuvA and exits via RuvB. An RuvB hexamer assembles on each DNA strand where it exits the tetramer. Each RuvB hexamer is contacted by two RuvA subunits (via domain III) on 2 adjacent RuvB subunits; this complex drives branch migration. In the full resolvosome a probable DNA-RuvA(4)-RuvB(12)-RuvC(2) complex forms which resolves the HJ.</text>
</comment>
<comment type="subcellular location">
    <subcellularLocation>
        <location evidence="1">Cytoplasm</location>
    </subcellularLocation>
</comment>
<comment type="domain">
    <text evidence="1">Has three domains with a flexible linker between the domains II and III and assumes an 'L' shape. Domain III is highly mobile and contacts RuvB.</text>
</comment>
<comment type="similarity">
    <text evidence="1">Belongs to the RuvA family.</text>
</comment>